<reference key="1">
    <citation type="journal article" date="2010" name="BMC Genomics">
        <title>A genomic perspective on the potential of Actinobacillus succinogenes for industrial succinate production.</title>
        <authorList>
            <person name="McKinlay J.B."/>
            <person name="Laivenieks M."/>
            <person name="Schindler B.D."/>
            <person name="McKinlay A.A."/>
            <person name="Siddaramappa S."/>
            <person name="Challacombe J.F."/>
            <person name="Lowry S.R."/>
            <person name="Clum A."/>
            <person name="Lapidus A.L."/>
            <person name="Burkhart K.B."/>
            <person name="Harkins V."/>
            <person name="Vieille C."/>
        </authorList>
    </citation>
    <scope>NUCLEOTIDE SEQUENCE [LARGE SCALE GENOMIC DNA]</scope>
    <source>
        <strain>ATCC 55618 / DSM 22257 / CCUG 43843 / 130Z</strain>
    </source>
</reference>
<protein>
    <recommendedName>
        <fullName evidence="1">tRNA-cytidine(32) 2-sulfurtransferase</fullName>
        <ecNumber evidence="1">2.8.1.-</ecNumber>
    </recommendedName>
    <alternativeName>
        <fullName evidence="1">Two-thiocytidine biosynthesis protein A</fullName>
    </alternativeName>
    <alternativeName>
        <fullName evidence="1">tRNA 2-thiocytidine biosynthesis protein TtcA</fullName>
    </alternativeName>
</protein>
<evidence type="ECO:0000255" key="1">
    <source>
        <dbReference type="HAMAP-Rule" id="MF_01850"/>
    </source>
</evidence>
<keyword id="KW-0004">4Fe-4S</keyword>
<keyword id="KW-0067">ATP-binding</keyword>
<keyword id="KW-0963">Cytoplasm</keyword>
<keyword id="KW-0408">Iron</keyword>
<keyword id="KW-0411">Iron-sulfur</keyword>
<keyword id="KW-0460">Magnesium</keyword>
<keyword id="KW-0479">Metal-binding</keyword>
<keyword id="KW-0547">Nucleotide-binding</keyword>
<keyword id="KW-1185">Reference proteome</keyword>
<keyword id="KW-0694">RNA-binding</keyword>
<keyword id="KW-0808">Transferase</keyword>
<keyword id="KW-0819">tRNA processing</keyword>
<keyword id="KW-0820">tRNA-binding</keyword>
<dbReference type="EC" id="2.8.1.-" evidence="1"/>
<dbReference type="EMBL" id="CP000746">
    <property type="protein sequence ID" value="ABR74765.1"/>
    <property type="molecule type" value="Genomic_DNA"/>
</dbReference>
<dbReference type="RefSeq" id="WP_012073142.1">
    <property type="nucleotide sequence ID" value="NC_009655.1"/>
</dbReference>
<dbReference type="SMR" id="A6VP68"/>
<dbReference type="STRING" id="339671.Asuc_1406"/>
<dbReference type="KEGG" id="asu:Asuc_1406"/>
<dbReference type="eggNOG" id="COG0037">
    <property type="taxonomic scope" value="Bacteria"/>
</dbReference>
<dbReference type="HOGENOM" id="CLU_026481_0_0_6"/>
<dbReference type="OrthoDB" id="9801054at2"/>
<dbReference type="Proteomes" id="UP000001114">
    <property type="component" value="Chromosome"/>
</dbReference>
<dbReference type="GO" id="GO:0005737">
    <property type="term" value="C:cytoplasm"/>
    <property type="evidence" value="ECO:0007669"/>
    <property type="project" value="UniProtKB-SubCell"/>
</dbReference>
<dbReference type="GO" id="GO:0051539">
    <property type="term" value="F:4 iron, 4 sulfur cluster binding"/>
    <property type="evidence" value="ECO:0007669"/>
    <property type="project" value="UniProtKB-UniRule"/>
</dbReference>
<dbReference type="GO" id="GO:0005524">
    <property type="term" value="F:ATP binding"/>
    <property type="evidence" value="ECO:0007669"/>
    <property type="project" value="UniProtKB-UniRule"/>
</dbReference>
<dbReference type="GO" id="GO:0000287">
    <property type="term" value="F:magnesium ion binding"/>
    <property type="evidence" value="ECO:0007669"/>
    <property type="project" value="UniProtKB-UniRule"/>
</dbReference>
<dbReference type="GO" id="GO:0016783">
    <property type="term" value="F:sulfurtransferase activity"/>
    <property type="evidence" value="ECO:0007669"/>
    <property type="project" value="UniProtKB-UniRule"/>
</dbReference>
<dbReference type="GO" id="GO:0000049">
    <property type="term" value="F:tRNA binding"/>
    <property type="evidence" value="ECO:0007669"/>
    <property type="project" value="UniProtKB-KW"/>
</dbReference>
<dbReference type="GO" id="GO:0034227">
    <property type="term" value="P:tRNA thio-modification"/>
    <property type="evidence" value="ECO:0007669"/>
    <property type="project" value="UniProtKB-UniRule"/>
</dbReference>
<dbReference type="CDD" id="cd24138">
    <property type="entry name" value="TtcA-like"/>
    <property type="match status" value="1"/>
</dbReference>
<dbReference type="Gene3D" id="3.40.50.620">
    <property type="entry name" value="HUPs"/>
    <property type="match status" value="1"/>
</dbReference>
<dbReference type="HAMAP" id="MF_01850">
    <property type="entry name" value="TtcA"/>
    <property type="match status" value="1"/>
</dbReference>
<dbReference type="InterPro" id="IPR014729">
    <property type="entry name" value="Rossmann-like_a/b/a_fold"/>
</dbReference>
<dbReference type="InterPro" id="IPR011063">
    <property type="entry name" value="TilS/TtcA_N"/>
</dbReference>
<dbReference type="InterPro" id="IPR012089">
    <property type="entry name" value="tRNA_Cyd_32_2_STrfase"/>
</dbReference>
<dbReference type="InterPro" id="IPR035107">
    <property type="entry name" value="tRNA_thiolation_TtcA_Ctu1"/>
</dbReference>
<dbReference type="NCBIfam" id="NF007972">
    <property type="entry name" value="PRK10696.1"/>
    <property type="match status" value="1"/>
</dbReference>
<dbReference type="PANTHER" id="PTHR43686:SF1">
    <property type="entry name" value="AMINOTRAN_5 DOMAIN-CONTAINING PROTEIN"/>
    <property type="match status" value="1"/>
</dbReference>
<dbReference type="PANTHER" id="PTHR43686">
    <property type="entry name" value="SULFURTRANSFERASE-RELATED"/>
    <property type="match status" value="1"/>
</dbReference>
<dbReference type="Pfam" id="PF01171">
    <property type="entry name" value="ATP_bind_3"/>
    <property type="match status" value="1"/>
</dbReference>
<dbReference type="PIRSF" id="PIRSF004976">
    <property type="entry name" value="ATPase_YdaO"/>
    <property type="match status" value="1"/>
</dbReference>
<dbReference type="SUPFAM" id="SSF52402">
    <property type="entry name" value="Adenine nucleotide alpha hydrolases-like"/>
    <property type="match status" value="1"/>
</dbReference>
<proteinExistence type="inferred from homology"/>
<organism>
    <name type="scientific">Actinobacillus succinogenes (strain ATCC 55618 / DSM 22257 / CCUG 43843 / 130Z)</name>
    <dbReference type="NCBI Taxonomy" id="339671"/>
    <lineage>
        <taxon>Bacteria</taxon>
        <taxon>Pseudomonadati</taxon>
        <taxon>Pseudomonadota</taxon>
        <taxon>Gammaproteobacteria</taxon>
        <taxon>Pasteurellales</taxon>
        <taxon>Pasteurellaceae</taxon>
        <taxon>Actinobacillus</taxon>
    </lineage>
</organism>
<gene>
    <name evidence="1" type="primary">ttcA</name>
    <name type="ordered locus">Asuc_1406</name>
</gene>
<name>TTCA_ACTSZ</name>
<comment type="function">
    <text evidence="1">Catalyzes the ATP-dependent 2-thiolation of cytidine in position 32 of tRNA, to form 2-thiocytidine (s(2)C32). The sulfur atoms are provided by the cysteine/cysteine desulfurase (IscS) system.</text>
</comment>
<comment type="catalytic activity">
    <reaction evidence="1">
        <text>cytidine(32) in tRNA + S-sulfanyl-L-cysteinyl-[cysteine desulfurase] + AH2 + ATP = 2-thiocytidine(32) in tRNA + L-cysteinyl-[cysteine desulfurase] + A + AMP + diphosphate + H(+)</text>
        <dbReference type="Rhea" id="RHEA:57048"/>
        <dbReference type="Rhea" id="RHEA-COMP:10288"/>
        <dbReference type="Rhea" id="RHEA-COMP:12157"/>
        <dbReference type="Rhea" id="RHEA-COMP:12158"/>
        <dbReference type="Rhea" id="RHEA-COMP:14821"/>
        <dbReference type="ChEBI" id="CHEBI:13193"/>
        <dbReference type="ChEBI" id="CHEBI:15378"/>
        <dbReference type="ChEBI" id="CHEBI:17499"/>
        <dbReference type="ChEBI" id="CHEBI:29950"/>
        <dbReference type="ChEBI" id="CHEBI:30616"/>
        <dbReference type="ChEBI" id="CHEBI:33019"/>
        <dbReference type="ChEBI" id="CHEBI:61963"/>
        <dbReference type="ChEBI" id="CHEBI:82748"/>
        <dbReference type="ChEBI" id="CHEBI:141453"/>
        <dbReference type="ChEBI" id="CHEBI:456215"/>
    </reaction>
    <physiologicalReaction direction="left-to-right" evidence="1">
        <dbReference type="Rhea" id="RHEA:57049"/>
    </physiologicalReaction>
</comment>
<comment type="cofactor">
    <cofactor evidence="1">
        <name>Mg(2+)</name>
        <dbReference type="ChEBI" id="CHEBI:18420"/>
    </cofactor>
</comment>
<comment type="cofactor">
    <cofactor evidence="1">
        <name>[4Fe-4S] cluster</name>
        <dbReference type="ChEBI" id="CHEBI:49883"/>
    </cofactor>
    <text evidence="1">Binds 1 [4Fe-4S] cluster per subunit. The cluster is chelated by three Cys residues, the fourth Fe has a free coordination site that may bind a sulfur atom transferred from the persulfide of IscS.</text>
</comment>
<comment type="pathway">
    <text evidence="1">tRNA modification.</text>
</comment>
<comment type="subunit">
    <text evidence="1">Homodimer.</text>
</comment>
<comment type="subcellular location">
    <subcellularLocation>
        <location evidence="1">Cytoplasm</location>
    </subcellularLocation>
</comment>
<comment type="miscellaneous">
    <text evidence="1">The thiolation reaction likely consists of two steps: a first activation step by ATP to form an adenylated intermediate of the target base of tRNA, and a second nucleophilic substitution step of the sulfur (S) atom supplied by the hydrosulfide attached to the Fe-S cluster.</text>
</comment>
<comment type="similarity">
    <text evidence="1">Belongs to the TtcA family.</text>
</comment>
<feature type="chain" id="PRO_0000348653" description="tRNA-cytidine(32) 2-sulfurtransferase">
    <location>
        <begin position="1"/>
        <end position="312"/>
    </location>
</feature>
<feature type="short sequence motif" description="PP-loop motif" evidence="1">
    <location>
        <begin position="47"/>
        <end position="52"/>
    </location>
</feature>
<feature type="binding site" evidence="1">
    <location>
        <position position="122"/>
    </location>
    <ligand>
        <name>[4Fe-4S] cluster</name>
        <dbReference type="ChEBI" id="CHEBI:49883"/>
    </ligand>
</feature>
<feature type="binding site" evidence="1">
    <location>
        <position position="125"/>
    </location>
    <ligand>
        <name>[4Fe-4S] cluster</name>
        <dbReference type="ChEBI" id="CHEBI:49883"/>
    </ligand>
</feature>
<feature type="binding site" evidence="1">
    <location>
        <position position="213"/>
    </location>
    <ligand>
        <name>[4Fe-4S] cluster</name>
        <dbReference type="ChEBI" id="CHEBI:49883"/>
    </ligand>
</feature>
<sequence>MTEQTEKDKKQIYNLNKLQKRLRRNVGNAIADFNMIEEGDKVMVCLSGGKDSYTLLDILLNLKFSAPIHFDIVAVNLDQKQPGFPEHVLPQYLESIGVEYKIVEENTYGIVKEKIPEGKTTCSLCSRLRRGILYRTATELGATKIALGHHRDDMLATLFLNMFYGGKLKSMPPKLISDDGKQIVIRPLAYCKEKDIEKYAVAKQFPIIPCNLCGSQPNLQRQVVKEMLNTWDRQYPGRLETMFSAMQNVVPSHLCDPNLFDFKNIRRGQILEGVSGDIAFDKEELPPMPQFADEGESADFSGENLIQFKEVN</sequence>
<accession>A6VP68</accession>